<organism>
    <name type="scientific">Streptococcus pneumoniae (strain 70585)</name>
    <dbReference type="NCBI Taxonomy" id="488221"/>
    <lineage>
        <taxon>Bacteria</taxon>
        <taxon>Bacillati</taxon>
        <taxon>Bacillota</taxon>
        <taxon>Bacilli</taxon>
        <taxon>Lactobacillales</taxon>
        <taxon>Streptococcaceae</taxon>
        <taxon>Streptococcus</taxon>
    </lineage>
</organism>
<proteinExistence type="inferred from homology"/>
<evidence type="ECO:0000255" key="1">
    <source>
        <dbReference type="HAMAP-Rule" id="MF_00019"/>
    </source>
</evidence>
<dbReference type="EC" id="2.3.1.274" evidence="1"/>
<dbReference type="EMBL" id="CP000918">
    <property type="protein sequence ID" value="ACO16719.1"/>
    <property type="molecule type" value="Genomic_DNA"/>
</dbReference>
<dbReference type="RefSeq" id="WP_000717462.1">
    <property type="nucleotide sequence ID" value="NC_012468.1"/>
</dbReference>
<dbReference type="SMR" id="C1C9T4"/>
<dbReference type="KEGG" id="snm:SP70585_0097"/>
<dbReference type="HOGENOM" id="CLU_039379_1_1_9"/>
<dbReference type="UniPathway" id="UPA00085"/>
<dbReference type="Proteomes" id="UP000002211">
    <property type="component" value="Chromosome"/>
</dbReference>
<dbReference type="GO" id="GO:0005737">
    <property type="term" value="C:cytoplasm"/>
    <property type="evidence" value="ECO:0007669"/>
    <property type="project" value="UniProtKB-SubCell"/>
</dbReference>
<dbReference type="GO" id="GO:0043811">
    <property type="term" value="F:phosphate:acyl-[acyl carrier protein] acyltransferase activity"/>
    <property type="evidence" value="ECO:0007669"/>
    <property type="project" value="UniProtKB-UniRule"/>
</dbReference>
<dbReference type="GO" id="GO:0006633">
    <property type="term" value="P:fatty acid biosynthetic process"/>
    <property type="evidence" value="ECO:0007669"/>
    <property type="project" value="UniProtKB-UniRule"/>
</dbReference>
<dbReference type="GO" id="GO:0008654">
    <property type="term" value="P:phospholipid biosynthetic process"/>
    <property type="evidence" value="ECO:0007669"/>
    <property type="project" value="UniProtKB-KW"/>
</dbReference>
<dbReference type="Gene3D" id="3.40.718.10">
    <property type="entry name" value="Isopropylmalate Dehydrogenase"/>
    <property type="match status" value="1"/>
</dbReference>
<dbReference type="HAMAP" id="MF_00019">
    <property type="entry name" value="PlsX"/>
    <property type="match status" value="1"/>
</dbReference>
<dbReference type="InterPro" id="IPR003664">
    <property type="entry name" value="FA_synthesis"/>
</dbReference>
<dbReference type="InterPro" id="IPR012281">
    <property type="entry name" value="Phospholipid_synth_PlsX-like"/>
</dbReference>
<dbReference type="NCBIfam" id="TIGR00182">
    <property type="entry name" value="plsX"/>
    <property type="match status" value="1"/>
</dbReference>
<dbReference type="PANTHER" id="PTHR30100">
    <property type="entry name" value="FATTY ACID/PHOSPHOLIPID SYNTHESIS PROTEIN PLSX"/>
    <property type="match status" value="1"/>
</dbReference>
<dbReference type="PANTHER" id="PTHR30100:SF1">
    <property type="entry name" value="PHOSPHATE ACYLTRANSFERASE"/>
    <property type="match status" value="1"/>
</dbReference>
<dbReference type="Pfam" id="PF02504">
    <property type="entry name" value="FA_synthesis"/>
    <property type="match status" value="1"/>
</dbReference>
<dbReference type="PIRSF" id="PIRSF002465">
    <property type="entry name" value="Phsphlp_syn_PlsX"/>
    <property type="match status" value="1"/>
</dbReference>
<dbReference type="SUPFAM" id="SSF53659">
    <property type="entry name" value="Isocitrate/Isopropylmalate dehydrogenase-like"/>
    <property type="match status" value="1"/>
</dbReference>
<sequence length="330" mass="34946">MKKIAVDAMGGDYAPQAIVEGVNQALSDFSDIEVQLYGDEAKIKQYLTATERVSIIHTDEKIDSDDEPTRAIRNKKNASMVLAAKAVKDGEADAVLSAGNTGALLAAGFFIVGRIKNIDRPGLMSTLPTVDGKGFDMLDLGANAENTAQHLHQYAVLGSFYAKNVRGIAQPRVGLLNNGTESSKGDPLRKETYELLVADESLNFIGNVEARDLMNGVADVVVADGFTGNAVLKSIEGTAMGIMGLLKTAITGGGLRAKLGALLLKDSLRGLKKQLNYSDVGGAVLFGVKAPVVKTHGSSDAKAVYSTIRQIRTMLETDVVAQTAREFSGE</sequence>
<reference key="1">
    <citation type="journal article" date="2010" name="Genome Biol.">
        <title>Structure and dynamics of the pan-genome of Streptococcus pneumoniae and closely related species.</title>
        <authorList>
            <person name="Donati C."/>
            <person name="Hiller N.L."/>
            <person name="Tettelin H."/>
            <person name="Muzzi A."/>
            <person name="Croucher N.J."/>
            <person name="Angiuoli S.V."/>
            <person name="Oggioni M."/>
            <person name="Dunning Hotopp J.C."/>
            <person name="Hu F.Z."/>
            <person name="Riley D.R."/>
            <person name="Covacci A."/>
            <person name="Mitchell T.J."/>
            <person name="Bentley S.D."/>
            <person name="Kilian M."/>
            <person name="Ehrlich G.D."/>
            <person name="Rappuoli R."/>
            <person name="Moxon E.R."/>
            <person name="Masignani V."/>
        </authorList>
    </citation>
    <scope>NUCLEOTIDE SEQUENCE [LARGE SCALE GENOMIC DNA]</scope>
    <source>
        <strain>70585</strain>
    </source>
</reference>
<feature type="chain" id="PRO_1000193147" description="Phosphate acyltransferase">
    <location>
        <begin position="1"/>
        <end position="330"/>
    </location>
</feature>
<name>PLSX_STRP7</name>
<gene>
    <name evidence="1" type="primary">plsX</name>
    <name type="ordered locus">SP70585_0097</name>
</gene>
<accession>C1C9T4</accession>
<comment type="function">
    <text evidence="1">Catalyzes the reversible formation of acyl-phosphate (acyl-PO(4)) from acyl-[acyl-carrier-protein] (acyl-ACP). This enzyme utilizes acyl-ACP as fatty acyl donor, but not acyl-CoA.</text>
</comment>
<comment type="catalytic activity">
    <reaction evidence="1">
        <text>a fatty acyl-[ACP] + phosphate = an acyl phosphate + holo-[ACP]</text>
        <dbReference type="Rhea" id="RHEA:42292"/>
        <dbReference type="Rhea" id="RHEA-COMP:9685"/>
        <dbReference type="Rhea" id="RHEA-COMP:14125"/>
        <dbReference type="ChEBI" id="CHEBI:43474"/>
        <dbReference type="ChEBI" id="CHEBI:59918"/>
        <dbReference type="ChEBI" id="CHEBI:64479"/>
        <dbReference type="ChEBI" id="CHEBI:138651"/>
        <dbReference type="EC" id="2.3.1.274"/>
    </reaction>
</comment>
<comment type="pathway">
    <text evidence="1">Lipid metabolism; phospholipid metabolism.</text>
</comment>
<comment type="subunit">
    <text evidence="1">Homodimer. Probably interacts with PlsY.</text>
</comment>
<comment type="subcellular location">
    <subcellularLocation>
        <location evidence="1">Cytoplasm</location>
    </subcellularLocation>
    <text evidence="1">Associated with the membrane possibly through PlsY.</text>
</comment>
<comment type="similarity">
    <text evidence="1">Belongs to the PlsX family.</text>
</comment>
<protein>
    <recommendedName>
        <fullName evidence="1">Phosphate acyltransferase</fullName>
        <ecNumber evidence="1">2.3.1.274</ecNumber>
    </recommendedName>
    <alternativeName>
        <fullName evidence="1">Acyl-ACP phosphotransacylase</fullName>
    </alternativeName>
    <alternativeName>
        <fullName evidence="1">Acyl-[acyl-carrier-protein]--phosphate acyltransferase</fullName>
    </alternativeName>
    <alternativeName>
        <fullName evidence="1">Phosphate-acyl-ACP acyltransferase</fullName>
    </alternativeName>
</protein>
<keyword id="KW-0963">Cytoplasm</keyword>
<keyword id="KW-0444">Lipid biosynthesis</keyword>
<keyword id="KW-0443">Lipid metabolism</keyword>
<keyword id="KW-0594">Phospholipid biosynthesis</keyword>
<keyword id="KW-1208">Phospholipid metabolism</keyword>
<keyword id="KW-0808">Transferase</keyword>